<sequence length="346" mass="36554">MLVLGIESSCDETGLALYDTQRGLLAHALHSQIAMHREYGGVVPELASRDHIRRALPLLEEVMAQSGTHRDDIDAIAFTQGPGLAGALLVGASIANALALAWNKPTVGIHHLEGHLLSPLLVDEPPPFPFIALLVSGGHTQLMRVTDVGVYETLGETLDDAAGEAFDKTAKLIGLGYPGGPEVSKLAETGTPGAVVLPRPMLHSGDLDFSFSGLKTAVLTQMKKFEAAKLESEALERAKADLARGFVDAAVDVLVAKSLAALKQTKLKRLVVAGGVGANRQLRAALSAAAAKRGFDVHYPDLALCTDNGAMIALAGALRLGRWPEQANADYAFTVKPRWDLASLAR</sequence>
<proteinExistence type="inferred from homology"/>
<accession>B1Z1G4</accession>
<dbReference type="EC" id="2.3.1.234" evidence="1"/>
<dbReference type="EMBL" id="CP001026">
    <property type="protein sequence ID" value="ACB66245.1"/>
    <property type="molecule type" value="Genomic_DNA"/>
</dbReference>
<dbReference type="RefSeq" id="WP_012365634.1">
    <property type="nucleotide sequence ID" value="NC_010552.1"/>
</dbReference>
<dbReference type="SMR" id="B1Z1G4"/>
<dbReference type="KEGG" id="bac:BamMC406_3778"/>
<dbReference type="HOGENOM" id="CLU_023208_0_2_4"/>
<dbReference type="OrthoDB" id="9806197at2"/>
<dbReference type="Proteomes" id="UP000001680">
    <property type="component" value="Chromosome 2"/>
</dbReference>
<dbReference type="GO" id="GO:0005737">
    <property type="term" value="C:cytoplasm"/>
    <property type="evidence" value="ECO:0007669"/>
    <property type="project" value="UniProtKB-SubCell"/>
</dbReference>
<dbReference type="GO" id="GO:0005506">
    <property type="term" value="F:iron ion binding"/>
    <property type="evidence" value="ECO:0007669"/>
    <property type="project" value="UniProtKB-UniRule"/>
</dbReference>
<dbReference type="GO" id="GO:0061711">
    <property type="term" value="F:N(6)-L-threonylcarbamoyladenine synthase activity"/>
    <property type="evidence" value="ECO:0007669"/>
    <property type="project" value="UniProtKB-EC"/>
</dbReference>
<dbReference type="GO" id="GO:0002949">
    <property type="term" value="P:tRNA threonylcarbamoyladenosine modification"/>
    <property type="evidence" value="ECO:0007669"/>
    <property type="project" value="UniProtKB-UniRule"/>
</dbReference>
<dbReference type="CDD" id="cd24133">
    <property type="entry name" value="ASKHA_NBD_TsaD_bac"/>
    <property type="match status" value="1"/>
</dbReference>
<dbReference type="FunFam" id="3.30.420.40:FF:000012">
    <property type="entry name" value="tRNA N6-adenosine threonylcarbamoyltransferase"/>
    <property type="match status" value="1"/>
</dbReference>
<dbReference type="FunFam" id="3.30.420.40:FF:000040">
    <property type="entry name" value="tRNA N6-adenosine threonylcarbamoyltransferase"/>
    <property type="match status" value="1"/>
</dbReference>
<dbReference type="Gene3D" id="3.30.420.40">
    <property type="match status" value="2"/>
</dbReference>
<dbReference type="HAMAP" id="MF_01445">
    <property type="entry name" value="TsaD"/>
    <property type="match status" value="1"/>
</dbReference>
<dbReference type="InterPro" id="IPR043129">
    <property type="entry name" value="ATPase_NBD"/>
</dbReference>
<dbReference type="InterPro" id="IPR000905">
    <property type="entry name" value="Gcp-like_dom"/>
</dbReference>
<dbReference type="InterPro" id="IPR017861">
    <property type="entry name" value="KAE1/TsaD"/>
</dbReference>
<dbReference type="InterPro" id="IPR022450">
    <property type="entry name" value="TsaD"/>
</dbReference>
<dbReference type="NCBIfam" id="TIGR00329">
    <property type="entry name" value="gcp_kae1"/>
    <property type="match status" value="1"/>
</dbReference>
<dbReference type="NCBIfam" id="TIGR03723">
    <property type="entry name" value="T6A_TsaD_YgjD"/>
    <property type="match status" value="1"/>
</dbReference>
<dbReference type="PANTHER" id="PTHR11735">
    <property type="entry name" value="TRNA N6-ADENOSINE THREONYLCARBAMOYLTRANSFERASE"/>
    <property type="match status" value="1"/>
</dbReference>
<dbReference type="PANTHER" id="PTHR11735:SF6">
    <property type="entry name" value="TRNA N6-ADENOSINE THREONYLCARBAMOYLTRANSFERASE, MITOCHONDRIAL"/>
    <property type="match status" value="1"/>
</dbReference>
<dbReference type="Pfam" id="PF00814">
    <property type="entry name" value="TsaD"/>
    <property type="match status" value="1"/>
</dbReference>
<dbReference type="PRINTS" id="PR00789">
    <property type="entry name" value="OSIALOPTASE"/>
</dbReference>
<dbReference type="SUPFAM" id="SSF53067">
    <property type="entry name" value="Actin-like ATPase domain"/>
    <property type="match status" value="2"/>
</dbReference>
<evidence type="ECO:0000255" key="1">
    <source>
        <dbReference type="HAMAP-Rule" id="MF_01445"/>
    </source>
</evidence>
<comment type="function">
    <text evidence="1">Required for the formation of a threonylcarbamoyl group on adenosine at position 37 (t(6)A37) in tRNAs that read codons beginning with adenine. Is involved in the transfer of the threonylcarbamoyl moiety of threonylcarbamoyl-AMP (TC-AMP) to the N6 group of A37, together with TsaE and TsaB. TsaD likely plays a direct catalytic role in this reaction.</text>
</comment>
<comment type="catalytic activity">
    <reaction evidence="1">
        <text>L-threonylcarbamoyladenylate + adenosine(37) in tRNA = N(6)-L-threonylcarbamoyladenosine(37) in tRNA + AMP + H(+)</text>
        <dbReference type="Rhea" id="RHEA:37059"/>
        <dbReference type="Rhea" id="RHEA-COMP:10162"/>
        <dbReference type="Rhea" id="RHEA-COMP:10163"/>
        <dbReference type="ChEBI" id="CHEBI:15378"/>
        <dbReference type="ChEBI" id="CHEBI:73682"/>
        <dbReference type="ChEBI" id="CHEBI:74411"/>
        <dbReference type="ChEBI" id="CHEBI:74418"/>
        <dbReference type="ChEBI" id="CHEBI:456215"/>
        <dbReference type="EC" id="2.3.1.234"/>
    </reaction>
</comment>
<comment type="cofactor">
    <cofactor evidence="1">
        <name>Fe(2+)</name>
        <dbReference type="ChEBI" id="CHEBI:29033"/>
    </cofactor>
    <text evidence="1">Binds 1 Fe(2+) ion per subunit.</text>
</comment>
<comment type="subcellular location">
    <subcellularLocation>
        <location evidence="1">Cytoplasm</location>
    </subcellularLocation>
</comment>
<comment type="similarity">
    <text evidence="1">Belongs to the KAE1 / TsaD family.</text>
</comment>
<name>TSAD_BURA4</name>
<feature type="chain" id="PRO_1000145954" description="tRNA N6-adenosine threonylcarbamoyltransferase">
    <location>
        <begin position="1"/>
        <end position="346"/>
    </location>
</feature>
<feature type="binding site" evidence="1">
    <location>
        <position position="111"/>
    </location>
    <ligand>
        <name>Fe cation</name>
        <dbReference type="ChEBI" id="CHEBI:24875"/>
    </ligand>
</feature>
<feature type="binding site" evidence="1">
    <location>
        <position position="115"/>
    </location>
    <ligand>
        <name>Fe cation</name>
        <dbReference type="ChEBI" id="CHEBI:24875"/>
    </ligand>
</feature>
<feature type="binding site" evidence="1">
    <location>
        <begin position="134"/>
        <end position="138"/>
    </location>
    <ligand>
        <name>substrate</name>
    </ligand>
</feature>
<feature type="binding site" evidence="1">
    <location>
        <position position="167"/>
    </location>
    <ligand>
        <name>substrate</name>
    </ligand>
</feature>
<feature type="binding site" evidence="1">
    <location>
        <position position="180"/>
    </location>
    <ligand>
        <name>substrate</name>
    </ligand>
</feature>
<feature type="binding site" evidence="1">
    <location>
        <position position="279"/>
    </location>
    <ligand>
        <name>substrate</name>
    </ligand>
</feature>
<feature type="binding site" evidence="1">
    <location>
        <position position="307"/>
    </location>
    <ligand>
        <name>Fe cation</name>
        <dbReference type="ChEBI" id="CHEBI:24875"/>
    </ligand>
</feature>
<organism>
    <name type="scientific">Burkholderia ambifaria (strain MC40-6)</name>
    <dbReference type="NCBI Taxonomy" id="398577"/>
    <lineage>
        <taxon>Bacteria</taxon>
        <taxon>Pseudomonadati</taxon>
        <taxon>Pseudomonadota</taxon>
        <taxon>Betaproteobacteria</taxon>
        <taxon>Burkholderiales</taxon>
        <taxon>Burkholderiaceae</taxon>
        <taxon>Burkholderia</taxon>
        <taxon>Burkholderia cepacia complex</taxon>
    </lineage>
</organism>
<gene>
    <name evidence="1" type="primary">tsaD</name>
    <name type="synonym">gcp</name>
    <name type="ordered locus">BamMC406_3778</name>
</gene>
<reference key="1">
    <citation type="submission" date="2008-04" db="EMBL/GenBank/DDBJ databases">
        <title>Complete sequence of chromosome 2 of Burkholderia ambifaria MC40-6.</title>
        <authorList>
            <person name="Copeland A."/>
            <person name="Lucas S."/>
            <person name="Lapidus A."/>
            <person name="Glavina del Rio T."/>
            <person name="Dalin E."/>
            <person name="Tice H."/>
            <person name="Pitluck S."/>
            <person name="Chain P."/>
            <person name="Malfatti S."/>
            <person name="Shin M."/>
            <person name="Vergez L."/>
            <person name="Lang D."/>
            <person name="Schmutz J."/>
            <person name="Larimer F."/>
            <person name="Land M."/>
            <person name="Hauser L."/>
            <person name="Kyrpides N."/>
            <person name="Lykidis A."/>
            <person name="Ramette A."/>
            <person name="Konstantinidis K."/>
            <person name="Tiedje J."/>
            <person name="Richardson P."/>
        </authorList>
    </citation>
    <scope>NUCLEOTIDE SEQUENCE [LARGE SCALE GENOMIC DNA]</scope>
    <source>
        <strain>MC40-6</strain>
    </source>
</reference>
<keyword id="KW-0012">Acyltransferase</keyword>
<keyword id="KW-0963">Cytoplasm</keyword>
<keyword id="KW-0408">Iron</keyword>
<keyword id="KW-0479">Metal-binding</keyword>
<keyword id="KW-0808">Transferase</keyword>
<keyword id="KW-0819">tRNA processing</keyword>
<protein>
    <recommendedName>
        <fullName evidence="1">tRNA N6-adenosine threonylcarbamoyltransferase</fullName>
        <ecNumber evidence="1">2.3.1.234</ecNumber>
    </recommendedName>
    <alternativeName>
        <fullName evidence="1">N6-L-threonylcarbamoyladenine synthase</fullName>
        <shortName evidence="1">t(6)A synthase</shortName>
    </alternativeName>
    <alternativeName>
        <fullName evidence="1">t(6)A37 threonylcarbamoyladenosine biosynthesis protein TsaD</fullName>
    </alternativeName>
    <alternativeName>
        <fullName evidence="1">tRNA threonylcarbamoyladenosine biosynthesis protein TsaD</fullName>
    </alternativeName>
</protein>